<feature type="chain" id="PRO_0000437099" description="Questin oxidase">
    <location>
        <begin position="1"/>
        <end position="446"/>
    </location>
</feature>
<name>GEDK_ASPTN</name>
<gene>
    <name evidence="8" type="primary">gedK</name>
    <name type="ORF">ATEG_08459</name>
</gene>
<sequence length="446" mass="49347">MATATQIFLSPDHAGIARVSECPVGAIEAANHLLQTNHDEHHMFWRPVAGHNHLTHSVLTILALGGGPAELQRAFDDARDIQRPIPPVDRQVVEQLGDPEQFRSRIGQLDQYSNFLAFFSQEIATKGYRAVVDEHCFSGSRNAETLFAQLYEGLYHPVIHLAFGIEFEQPSIVAEALAQVASHDSMGIEAFLMDCEAEATQSAHSGRTLVQLFRDAEADEALRHAAEGFDDGPARVRDGVLGRTARAITALAAQFRVDPQDIEHRLAEMINCSAFITGAVQRTGKPRKIDFFHLHTVTASLSIDILVRQPWISPVVKARLVEWKARVDLVWYTATGAVQLHLPSLLNYMPTSSAGMDWAALYRAVAAVHDDGHLAKLVRALKSGEAVSNPFEKGAGETFPIQGIAWLKLAQMAYDTTVDRPIEQKWIWGIGFDENWTHVLSLESEK</sequence>
<dbReference type="EC" id="1.14.13.43" evidence="6"/>
<dbReference type="EMBL" id="CH476605">
    <property type="protein sequence ID" value="EAU31632.1"/>
    <property type="molecule type" value="Genomic_DNA"/>
</dbReference>
<dbReference type="RefSeq" id="XP_001217598.1">
    <property type="nucleotide sequence ID" value="XM_001217597.1"/>
</dbReference>
<dbReference type="SMR" id="Q0CCX5"/>
<dbReference type="STRING" id="341663.Q0CCX5"/>
<dbReference type="EnsemblFungi" id="EAU31632">
    <property type="protein sequence ID" value="EAU31632"/>
    <property type="gene ID" value="ATEG_08459"/>
</dbReference>
<dbReference type="GeneID" id="4353197"/>
<dbReference type="VEuPathDB" id="FungiDB:ATEG_08459"/>
<dbReference type="eggNOG" id="ENOG502S69W">
    <property type="taxonomic scope" value="Eukaryota"/>
</dbReference>
<dbReference type="HOGENOM" id="CLU_019145_2_1_1"/>
<dbReference type="OMA" id="KHHCFWG"/>
<dbReference type="OrthoDB" id="10004862at2759"/>
<dbReference type="BioCyc" id="MetaCyc:MONOMER-17514"/>
<dbReference type="Proteomes" id="UP000007963">
    <property type="component" value="Unassembled WGS sequence"/>
</dbReference>
<dbReference type="GO" id="GO:0050246">
    <property type="term" value="F:questin monooxygenase (NADPH) activity"/>
    <property type="evidence" value="ECO:0007669"/>
    <property type="project" value="UniProtKB-EC"/>
</dbReference>
<dbReference type="InterPro" id="IPR025337">
    <property type="entry name" value="Questin_oxidase-like"/>
</dbReference>
<dbReference type="PANTHER" id="PTHR35870:SF7">
    <property type="entry name" value="BAEYER-VILLIGER OXIDASE MDPL"/>
    <property type="match status" value="1"/>
</dbReference>
<dbReference type="PANTHER" id="PTHR35870">
    <property type="entry name" value="PROTEIN, PUTATIVE (AFU_ORTHOLOGUE AFUA_5G03330)-RELATED"/>
    <property type="match status" value="1"/>
</dbReference>
<dbReference type="Pfam" id="PF14027">
    <property type="entry name" value="Questin_oxidase"/>
    <property type="match status" value="1"/>
</dbReference>
<keyword id="KW-0560">Oxidoreductase</keyword>
<keyword id="KW-1185">Reference proteome</keyword>
<accession>Q0CCX5</accession>
<evidence type="ECO:0000269" key="1">
    <source>
    </source>
</evidence>
<evidence type="ECO:0000269" key="2">
    <source>
    </source>
</evidence>
<evidence type="ECO:0000269" key="3">
    <source>
    </source>
</evidence>
<evidence type="ECO:0000269" key="4">
    <source>
    </source>
</evidence>
<evidence type="ECO:0000269" key="5">
    <source>
    </source>
</evidence>
<evidence type="ECO:0000269" key="6">
    <source>
    </source>
</evidence>
<evidence type="ECO:0000269" key="7">
    <source>
    </source>
</evidence>
<evidence type="ECO:0000303" key="8">
    <source>
    </source>
</evidence>
<evidence type="ECO:0000303" key="9">
    <source>
    </source>
</evidence>
<evidence type="ECO:0000305" key="10"/>
<comment type="function">
    <text evidence="1 2 3 4 5 6 7">Questin oxidase; part of the gene cluster that mediates the biosynthesis of geodin, an intermediate in the biosynthesis of other natural products (PubMed:19549600, PubMed:24009710, PubMed:7665560). The pathway begins with the synthesis of atrochrysone thioester by the polyketide synthase (PKS) gedC (PubMed:12536215, PubMed:19549600). The atrochrysone carboxyl ACP thioesterase gedB then breaks the thioester bond and releases the atrochrysone carboxylic acid from gedC (PubMed:19549600). The atrochrysone carboxylic acid is then converted to atrochrysone which is further transformed into emodinanthrone (PubMed:24009710). The next step is performed by the emodinanthrone oxygenase gedH that catalyzes the oxidation of emodinanthrone to emodin (PubMed:1810248). Emodin O-methyltransferase encoded probably by gedA then catalyzes methylation of the 8-hydroxy group of emodin to form questin (PubMed:1444712). Ring cleavage of questin by questin oxidase gedK leads to desmethylsulochrin via several intermediates including questin epoxide (PubMed:3182756). Another methylation step probably catalyzed by methyltransferase gedG leads to the formation of sulochrin which is further converted to dihydrogeodin by the sulochrin halogenase gedL (PubMed:24009710). Finally, the dihydrogeodin oxidase gedJ catalyzes the stereospecific phenol oxidative coupling reaction converting dihydrogeodin to geodin (PubMed:7665560).</text>
</comment>
<comment type="catalytic activity">
    <reaction evidence="6">
        <text>questin + NADPH + O2 = demethylsulochrin + NADP(+)</text>
        <dbReference type="Rhea" id="RHEA:10836"/>
        <dbReference type="ChEBI" id="CHEBI:15379"/>
        <dbReference type="ChEBI" id="CHEBI:57676"/>
        <dbReference type="ChEBI" id="CHEBI:57783"/>
        <dbReference type="ChEBI" id="CHEBI:58349"/>
        <dbReference type="ChEBI" id="CHEBI:77886"/>
        <dbReference type="EC" id="1.14.13.43"/>
    </reaction>
    <physiologicalReaction direction="left-to-right" evidence="6">
        <dbReference type="Rhea" id="RHEA:10837"/>
    </physiologicalReaction>
</comment>
<comment type="biophysicochemical properties">
    <phDependence>
        <text evidence="6">Optimum pH is 2.5.</text>
    </phDependence>
</comment>
<comment type="pathway">
    <text evidence="6">Secondary metabolite biosynthesis.</text>
</comment>
<comment type="similarity">
    <text evidence="10">Belongs to the questin oxidase family.</text>
</comment>
<proteinExistence type="evidence at protein level"/>
<reference key="1">
    <citation type="submission" date="2005-09" db="EMBL/GenBank/DDBJ databases">
        <title>Annotation of the Aspergillus terreus NIH2624 genome.</title>
        <authorList>
            <person name="Birren B.W."/>
            <person name="Lander E.S."/>
            <person name="Galagan J.E."/>
            <person name="Nusbaum C."/>
            <person name="Devon K."/>
            <person name="Henn M."/>
            <person name="Ma L.-J."/>
            <person name="Jaffe D.B."/>
            <person name="Butler J."/>
            <person name="Alvarez P."/>
            <person name="Gnerre S."/>
            <person name="Grabherr M."/>
            <person name="Kleber M."/>
            <person name="Mauceli E.W."/>
            <person name="Brockman W."/>
            <person name="Rounsley S."/>
            <person name="Young S.K."/>
            <person name="LaButti K."/>
            <person name="Pushparaj V."/>
            <person name="DeCaprio D."/>
            <person name="Crawford M."/>
            <person name="Koehrsen M."/>
            <person name="Engels R."/>
            <person name="Montgomery P."/>
            <person name="Pearson M."/>
            <person name="Howarth C."/>
            <person name="Larson L."/>
            <person name="Luoma S."/>
            <person name="White J."/>
            <person name="Alvarado L."/>
            <person name="Kodira C.D."/>
            <person name="Zeng Q."/>
            <person name="Oleary S."/>
            <person name="Yandava C."/>
            <person name="Denning D.W."/>
            <person name="Nierman W.C."/>
            <person name="Milne T."/>
            <person name="Madden K."/>
        </authorList>
    </citation>
    <scope>NUCLEOTIDE SEQUENCE [LARGE SCALE GENOMIC DNA]</scope>
    <source>
        <strain>NIH 2624 / FGSC A1156</strain>
    </source>
</reference>
<reference key="2">
    <citation type="journal article" date="1988" name="J. Biochem.">
        <title>A novel anthraquinone ring cleavage enzyme from Aspergillus terreus.</title>
        <authorList>
            <person name="Fujii I."/>
            <person name="Ebizuka Y."/>
            <person name="Sankawa U."/>
        </authorList>
    </citation>
    <scope>FUNCTION</scope>
    <scope>CATALYTIC ACTIVITY</scope>
    <scope>SUBCELLULAR LOCATION</scope>
    <scope>BIOPHYSICOCHEMICAL PROPERTIES</scope>
</reference>
<reference key="3">
    <citation type="journal article" date="1991" name="Biochem. Int.">
        <title>Identification of emodinanthrone oxygenase in fungus Aspergillus terreus.</title>
        <authorList>
            <person name="Fujii I."/>
            <person name="Chen Z.G."/>
            <person name="Ebizuka Y."/>
            <person name="Sankawa U."/>
        </authorList>
    </citation>
    <scope>FUNCTION</scope>
</reference>
<reference key="4">
    <citation type="journal article" date="1992" name="Arch. Microbiol.">
        <title>Emodin O-methyltransferase from Aspergillus terreus.</title>
        <authorList>
            <person name="Chen Z.G."/>
            <person name="Fujii I."/>
            <person name="Ebizuka Y."/>
            <person name="Sankawa U."/>
        </authorList>
    </citation>
    <scope>FUNCTION</scope>
</reference>
<reference key="5">
    <citation type="journal article" date="1995" name="J. Biol. Chem.">
        <title>Molecular cloning and heterologous expression of the gene encoding dihydrogeodin oxidase, a multicopper blue enzyme from Aspergillus terreus.</title>
        <authorList>
            <person name="Huang K.X."/>
            <person name="Fujii I."/>
            <person name="Ebizuka Y."/>
            <person name="Gomi K."/>
            <person name="Sankawa U."/>
        </authorList>
    </citation>
    <scope>FUNCTION</scope>
</reference>
<reference key="6">
    <citation type="journal article" date="2003" name="Nat. Biotechnol.">
        <title>Integrating transcriptional and metabolite profiles to direct the engineering of lovastatin-producing fungal strains.</title>
        <authorList>
            <person name="Askenazi M."/>
            <person name="Driggers E.M."/>
            <person name="Holtzman D.A."/>
            <person name="Norman T.C."/>
            <person name="Iverson S."/>
            <person name="Zimmer D.P."/>
            <person name="Boers M.E."/>
            <person name="Blomquist P.R."/>
            <person name="Martinez E.J."/>
            <person name="Monreal A.W."/>
            <person name="Feibelman T.P."/>
            <person name="Mayorga M.E."/>
            <person name="Maxon M.E."/>
            <person name="Sykes K."/>
            <person name="Tobin J.V."/>
            <person name="Cordero E."/>
            <person name="Salama S.R."/>
            <person name="Trueheart J."/>
            <person name="Royer J.C."/>
            <person name="Madden K.T."/>
        </authorList>
    </citation>
    <scope>FUNCTION</scope>
</reference>
<reference key="7">
    <citation type="journal article" date="2009" name="Chem. Biol.">
        <title>Physically discrete beta-lactamase-type thioesterase catalyzes product release in atrochrysone synthesis by iterative type I polyketide synthase.</title>
        <authorList>
            <person name="Awakawa T."/>
            <person name="Yokota K."/>
            <person name="Funa N."/>
            <person name="Doi F."/>
            <person name="Mori N."/>
            <person name="Watanabe H."/>
            <person name="Horinouchi S."/>
        </authorList>
    </citation>
    <scope>FUNCTION</scope>
</reference>
<reference key="8">
    <citation type="journal article" date="2013" name="PLoS ONE">
        <title>Heterologous reconstitution of the intact geodin gene cluster in Aspergillus nidulans through a simple and versatile PCR based approach.</title>
        <authorList>
            <person name="Nielsen M.T."/>
            <person name="Nielsen J.B."/>
            <person name="Anyaogu D.C."/>
            <person name="Holm D.K."/>
            <person name="Nielsen K.F."/>
            <person name="Larsen T.O."/>
            <person name="Mortensen U.H."/>
        </authorList>
    </citation>
    <scope>FUNCTION</scope>
</reference>
<organism>
    <name type="scientific">Aspergillus terreus (strain NIH 2624 / FGSC A1156)</name>
    <dbReference type="NCBI Taxonomy" id="341663"/>
    <lineage>
        <taxon>Eukaryota</taxon>
        <taxon>Fungi</taxon>
        <taxon>Dikarya</taxon>
        <taxon>Ascomycota</taxon>
        <taxon>Pezizomycotina</taxon>
        <taxon>Eurotiomycetes</taxon>
        <taxon>Eurotiomycetidae</taxon>
        <taxon>Eurotiales</taxon>
        <taxon>Aspergillaceae</taxon>
        <taxon>Aspergillus</taxon>
        <taxon>Aspergillus subgen. Circumdati</taxon>
    </lineage>
</organism>
<protein>
    <recommendedName>
        <fullName evidence="9">Questin oxidase</fullName>
        <ecNumber evidence="6">1.14.13.43</ecNumber>
    </recommendedName>
    <alternativeName>
        <fullName evidence="8">Geodin synthesis protein K</fullName>
    </alternativeName>
</protein>